<name>SYL_SHESM</name>
<comment type="catalytic activity">
    <reaction evidence="1">
        <text>tRNA(Leu) + L-leucine + ATP = L-leucyl-tRNA(Leu) + AMP + diphosphate</text>
        <dbReference type="Rhea" id="RHEA:11688"/>
        <dbReference type="Rhea" id="RHEA-COMP:9613"/>
        <dbReference type="Rhea" id="RHEA-COMP:9622"/>
        <dbReference type="ChEBI" id="CHEBI:30616"/>
        <dbReference type="ChEBI" id="CHEBI:33019"/>
        <dbReference type="ChEBI" id="CHEBI:57427"/>
        <dbReference type="ChEBI" id="CHEBI:78442"/>
        <dbReference type="ChEBI" id="CHEBI:78494"/>
        <dbReference type="ChEBI" id="CHEBI:456215"/>
        <dbReference type="EC" id="6.1.1.4"/>
    </reaction>
</comment>
<comment type="subcellular location">
    <subcellularLocation>
        <location evidence="1">Cytoplasm</location>
    </subcellularLocation>
</comment>
<comment type="similarity">
    <text evidence="1">Belongs to the class-I aminoacyl-tRNA synthetase family.</text>
</comment>
<reference key="1">
    <citation type="submission" date="2006-08" db="EMBL/GenBank/DDBJ databases">
        <title>Complete sequence of Shewanella sp. MR-4.</title>
        <authorList>
            <consortium name="US DOE Joint Genome Institute"/>
            <person name="Copeland A."/>
            <person name="Lucas S."/>
            <person name="Lapidus A."/>
            <person name="Barry K."/>
            <person name="Detter J.C."/>
            <person name="Glavina del Rio T."/>
            <person name="Hammon N."/>
            <person name="Israni S."/>
            <person name="Dalin E."/>
            <person name="Tice H."/>
            <person name="Pitluck S."/>
            <person name="Kiss H."/>
            <person name="Brettin T."/>
            <person name="Bruce D."/>
            <person name="Han C."/>
            <person name="Tapia R."/>
            <person name="Gilna P."/>
            <person name="Schmutz J."/>
            <person name="Larimer F."/>
            <person name="Land M."/>
            <person name="Hauser L."/>
            <person name="Kyrpides N."/>
            <person name="Mikhailova N."/>
            <person name="Nealson K."/>
            <person name="Konstantinidis K."/>
            <person name="Klappenbach J."/>
            <person name="Tiedje J."/>
            <person name="Richardson P."/>
        </authorList>
    </citation>
    <scope>NUCLEOTIDE SEQUENCE [LARGE SCALE GENOMIC DNA]</scope>
    <source>
        <strain>MR-4</strain>
    </source>
</reference>
<gene>
    <name evidence="1" type="primary">leuS</name>
    <name type="ordered locus">Shewmr4_0997</name>
</gene>
<sequence length="859" mass="96793">MQEQYNPSEIEALVQKHWHDNKTFEVTEDANKEKFYCLSMFPYPSGRLHMGHVRNYTIGDVVARFQRLQGKNVLQPIGWDSFGLPAENAAINNKTAPAPWTYQNIEYMKNQLKLLGFGYDWSREIATCTPEYYRWEQWFFTKLYEKGLVYKKTASVNWCPNDETVLANEQVQDGCCWRCDTPVEQKEIPQWFIKITAYAEELLNDIDTLDGWPEQVKTMQRNWIGRSEGVEMTFGVAGSDKSFDIYTTRPDTLMGVTYVAIAAGHPLAELAAQTNPELAQFIEECKNSTTSEADLATMEKRGVATGLYAIHPITGKQVPIWAANFVLMNYGTGAVMSVPGHDQRDYEFAKKYNLSIEAVIKPVDGELDISEAAYTEKGVLFNSGEFDGLDFDGAFNAIADKLVAEGKGKRQVNYRLRDWGVSRQRYWGAPIPMVTLADGTVIPTPEDQLPVILPEDVVMDGIQSPIKADKEWAKTQVNGQDALRETDTFDTFMESSWYYARYCSPQADQMLDPTKANYWLPVDQYIGGIEHACMHLLYFRFFHKLLRDAGLVNSNEPAKQLLTQGMVLADAFYYNNDKGARVWVSPLDVVTTEKDDKGRVTKAIDKDGNELVYTGMCKMSKSKNNGIDPQVMVEKYGADTVRLFMMFASPPELTLEWQESGVEGAHRFIKRLWKLASDYVAQDNSEALDVSKLTSEQKALRREVHKTIAKVTDDIGRRQMFNTAVAAVMELMNHLQKAPQTTGQDRAIIGEALTAVVRLLYPIIPHVSFTLWNELGNTNSIEDSQWPVVDESALVEDSKLIVVQVNGKVRAKITVAADADQASVEALGMADEQVIKYLDGVTVRKVIYVPGKLLSIVAN</sequence>
<feature type="chain" id="PRO_1000009427" description="Leucine--tRNA ligase">
    <location>
        <begin position="1"/>
        <end position="859"/>
    </location>
</feature>
<feature type="short sequence motif" description="'HIGH' region">
    <location>
        <begin position="42"/>
        <end position="52"/>
    </location>
</feature>
<feature type="short sequence motif" description="'KMSKS' region">
    <location>
        <begin position="618"/>
        <end position="622"/>
    </location>
</feature>
<feature type="binding site" evidence="1">
    <location>
        <position position="621"/>
    </location>
    <ligand>
        <name>ATP</name>
        <dbReference type="ChEBI" id="CHEBI:30616"/>
    </ligand>
</feature>
<accession>Q0HLJ0</accession>
<keyword id="KW-0030">Aminoacyl-tRNA synthetase</keyword>
<keyword id="KW-0067">ATP-binding</keyword>
<keyword id="KW-0963">Cytoplasm</keyword>
<keyword id="KW-0436">Ligase</keyword>
<keyword id="KW-0547">Nucleotide-binding</keyword>
<keyword id="KW-0648">Protein biosynthesis</keyword>
<proteinExistence type="inferred from homology"/>
<evidence type="ECO:0000255" key="1">
    <source>
        <dbReference type="HAMAP-Rule" id="MF_00049"/>
    </source>
</evidence>
<protein>
    <recommendedName>
        <fullName evidence="1">Leucine--tRNA ligase</fullName>
        <ecNumber evidence="1">6.1.1.4</ecNumber>
    </recommendedName>
    <alternativeName>
        <fullName evidence="1">Leucyl-tRNA synthetase</fullName>
        <shortName evidence="1">LeuRS</shortName>
    </alternativeName>
</protein>
<dbReference type="EC" id="6.1.1.4" evidence="1"/>
<dbReference type="EMBL" id="CP000446">
    <property type="protein sequence ID" value="ABI38077.1"/>
    <property type="molecule type" value="Genomic_DNA"/>
</dbReference>
<dbReference type="RefSeq" id="WP_011621789.1">
    <property type="nucleotide sequence ID" value="NC_008321.1"/>
</dbReference>
<dbReference type="SMR" id="Q0HLJ0"/>
<dbReference type="KEGG" id="she:Shewmr4_0997"/>
<dbReference type="HOGENOM" id="CLU_004427_0_0_6"/>
<dbReference type="GO" id="GO:0005829">
    <property type="term" value="C:cytosol"/>
    <property type="evidence" value="ECO:0007669"/>
    <property type="project" value="TreeGrafter"/>
</dbReference>
<dbReference type="GO" id="GO:0002161">
    <property type="term" value="F:aminoacyl-tRNA deacylase activity"/>
    <property type="evidence" value="ECO:0007669"/>
    <property type="project" value="InterPro"/>
</dbReference>
<dbReference type="GO" id="GO:0005524">
    <property type="term" value="F:ATP binding"/>
    <property type="evidence" value="ECO:0007669"/>
    <property type="project" value="UniProtKB-UniRule"/>
</dbReference>
<dbReference type="GO" id="GO:0004823">
    <property type="term" value="F:leucine-tRNA ligase activity"/>
    <property type="evidence" value="ECO:0007669"/>
    <property type="project" value="UniProtKB-UniRule"/>
</dbReference>
<dbReference type="GO" id="GO:0006429">
    <property type="term" value="P:leucyl-tRNA aminoacylation"/>
    <property type="evidence" value="ECO:0007669"/>
    <property type="project" value="UniProtKB-UniRule"/>
</dbReference>
<dbReference type="CDD" id="cd07958">
    <property type="entry name" value="Anticodon_Ia_Leu_BEm"/>
    <property type="match status" value="1"/>
</dbReference>
<dbReference type="CDD" id="cd00812">
    <property type="entry name" value="LeuRS_core"/>
    <property type="match status" value="1"/>
</dbReference>
<dbReference type="FunFam" id="1.10.730.10:FF:000003">
    <property type="entry name" value="Leucine--tRNA ligase"/>
    <property type="match status" value="1"/>
</dbReference>
<dbReference type="FunFam" id="2.20.28.290:FF:000001">
    <property type="entry name" value="Leucine--tRNA ligase"/>
    <property type="match status" value="1"/>
</dbReference>
<dbReference type="FunFam" id="3.10.20.590:FF:000001">
    <property type="entry name" value="Leucine--tRNA ligase"/>
    <property type="match status" value="1"/>
</dbReference>
<dbReference type="FunFam" id="3.40.50.620:FF:000003">
    <property type="entry name" value="Leucine--tRNA ligase"/>
    <property type="match status" value="1"/>
</dbReference>
<dbReference type="FunFam" id="3.40.50.620:FF:000124">
    <property type="entry name" value="Leucine--tRNA ligase"/>
    <property type="match status" value="1"/>
</dbReference>
<dbReference type="FunFam" id="3.90.740.10:FF:000012">
    <property type="entry name" value="Leucine--tRNA ligase"/>
    <property type="match status" value="1"/>
</dbReference>
<dbReference type="Gene3D" id="2.20.28.290">
    <property type="match status" value="1"/>
</dbReference>
<dbReference type="Gene3D" id="3.10.20.590">
    <property type="match status" value="1"/>
</dbReference>
<dbReference type="Gene3D" id="3.40.50.620">
    <property type="entry name" value="HUPs"/>
    <property type="match status" value="1"/>
</dbReference>
<dbReference type="Gene3D" id="1.10.730.10">
    <property type="entry name" value="Isoleucyl-tRNA Synthetase, Domain 1"/>
    <property type="match status" value="1"/>
</dbReference>
<dbReference type="Gene3D" id="3.90.740.10">
    <property type="entry name" value="Valyl/Leucyl/Isoleucyl-tRNA synthetase, editing domain"/>
    <property type="match status" value="1"/>
</dbReference>
<dbReference type="HAMAP" id="MF_00049_B">
    <property type="entry name" value="Leu_tRNA_synth_B"/>
    <property type="match status" value="1"/>
</dbReference>
<dbReference type="InterPro" id="IPR001412">
    <property type="entry name" value="aa-tRNA-synth_I_CS"/>
</dbReference>
<dbReference type="InterPro" id="IPR002300">
    <property type="entry name" value="aa-tRNA-synth_Ia"/>
</dbReference>
<dbReference type="InterPro" id="IPR002302">
    <property type="entry name" value="Leu-tRNA-ligase"/>
</dbReference>
<dbReference type="InterPro" id="IPR025709">
    <property type="entry name" value="Leu_tRNA-synth_edit"/>
</dbReference>
<dbReference type="InterPro" id="IPR013155">
    <property type="entry name" value="M/V/L/I-tRNA-synth_anticd-bd"/>
</dbReference>
<dbReference type="InterPro" id="IPR015413">
    <property type="entry name" value="Methionyl/Leucyl_tRNA_Synth"/>
</dbReference>
<dbReference type="InterPro" id="IPR014729">
    <property type="entry name" value="Rossmann-like_a/b/a_fold"/>
</dbReference>
<dbReference type="InterPro" id="IPR009080">
    <property type="entry name" value="tRNAsynth_Ia_anticodon-bd"/>
</dbReference>
<dbReference type="InterPro" id="IPR009008">
    <property type="entry name" value="Val/Leu/Ile-tRNA-synth_edit"/>
</dbReference>
<dbReference type="NCBIfam" id="TIGR00396">
    <property type="entry name" value="leuS_bact"/>
    <property type="match status" value="1"/>
</dbReference>
<dbReference type="PANTHER" id="PTHR43740:SF2">
    <property type="entry name" value="LEUCINE--TRNA LIGASE, MITOCHONDRIAL"/>
    <property type="match status" value="1"/>
</dbReference>
<dbReference type="PANTHER" id="PTHR43740">
    <property type="entry name" value="LEUCYL-TRNA SYNTHETASE"/>
    <property type="match status" value="1"/>
</dbReference>
<dbReference type="Pfam" id="PF08264">
    <property type="entry name" value="Anticodon_1"/>
    <property type="match status" value="1"/>
</dbReference>
<dbReference type="Pfam" id="PF00133">
    <property type="entry name" value="tRNA-synt_1"/>
    <property type="match status" value="2"/>
</dbReference>
<dbReference type="Pfam" id="PF13603">
    <property type="entry name" value="tRNA-synt_1_2"/>
    <property type="match status" value="1"/>
</dbReference>
<dbReference type="Pfam" id="PF09334">
    <property type="entry name" value="tRNA-synt_1g"/>
    <property type="match status" value="1"/>
</dbReference>
<dbReference type="PRINTS" id="PR00985">
    <property type="entry name" value="TRNASYNTHLEU"/>
</dbReference>
<dbReference type="SUPFAM" id="SSF47323">
    <property type="entry name" value="Anticodon-binding domain of a subclass of class I aminoacyl-tRNA synthetases"/>
    <property type="match status" value="1"/>
</dbReference>
<dbReference type="SUPFAM" id="SSF52374">
    <property type="entry name" value="Nucleotidylyl transferase"/>
    <property type="match status" value="1"/>
</dbReference>
<dbReference type="SUPFAM" id="SSF50677">
    <property type="entry name" value="ValRS/IleRS/LeuRS editing domain"/>
    <property type="match status" value="1"/>
</dbReference>
<dbReference type="PROSITE" id="PS00178">
    <property type="entry name" value="AA_TRNA_LIGASE_I"/>
    <property type="match status" value="1"/>
</dbReference>
<organism>
    <name type="scientific">Shewanella sp. (strain MR-4)</name>
    <dbReference type="NCBI Taxonomy" id="60480"/>
    <lineage>
        <taxon>Bacteria</taxon>
        <taxon>Pseudomonadati</taxon>
        <taxon>Pseudomonadota</taxon>
        <taxon>Gammaproteobacteria</taxon>
        <taxon>Alteromonadales</taxon>
        <taxon>Shewanellaceae</taxon>
        <taxon>Shewanella</taxon>
    </lineage>
</organism>